<comment type="function">
    <text>Gamma chains make up the fetal hemoglobin F, in combination with alpha chains.</text>
</comment>
<comment type="subunit">
    <text>Heterotetramer of two alpha chains and two gamma chains in fetal hemoglobin (Hb F).</text>
</comment>
<comment type="tissue specificity">
    <text>Red blood cells.</text>
</comment>
<comment type="similarity">
    <text evidence="1">Belongs to the globin family.</text>
</comment>
<organism>
    <name type="scientific">Carlito syrichta</name>
    <name type="common">Philippine tarsier</name>
    <name type="synonym">Tarsius syrichta</name>
    <dbReference type="NCBI Taxonomy" id="1868482"/>
    <lineage>
        <taxon>Eukaryota</taxon>
        <taxon>Metazoa</taxon>
        <taxon>Chordata</taxon>
        <taxon>Craniata</taxon>
        <taxon>Vertebrata</taxon>
        <taxon>Euteleostomi</taxon>
        <taxon>Mammalia</taxon>
        <taxon>Eutheria</taxon>
        <taxon>Euarchontoglires</taxon>
        <taxon>Primates</taxon>
        <taxon>Haplorrhini</taxon>
        <taxon>Tarsiiformes</taxon>
        <taxon>Tarsiidae</taxon>
        <taxon>Carlito</taxon>
    </lineage>
</organism>
<accession>P18436</accession>
<keyword id="KW-0349">Heme</keyword>
<keyword id="KW-0408">Iron</keyword>
<keyword id="KW-0479">Metal-binding</keyword>
<keyword id="KW-0561">Oxygen transport</keyword>
<keyword id="KW-1185">Reference proteome</keyword>
<keyword id="KW-0813">Transport</keyword>
<name>HBG_CARSF</name>
<protein>
    <recommendedName>
        <fullName>Hemoglobin subunit gamma</fullName>
    </recommendedName>
    <alternativeName>
        <fullName>Gamma-globin</fullName>
    </alternativeName>
    <alternativeName>
        <fullName>Hemoglobin gamma chain</fullName>
    </alternativeName>
</protein>
<reference key="1">
    <citation type="journal article" date="1989" name="Mol. Biol. Evol.">
        <title>A molecular view of primate phylogeny and important systematic and evolutionary questions.</title>
        <authorList>
            <person name="Koop B.F."/>
            <person name="Tagle D.A."/>
            <person name="Goodman M."/>
            <person name="Slightom J.L."/>
        </authorList>
    </citation>
    <scope>NUCLEOTIDE SEQUENCE [GENOMIC DNA]</scope>
</reference>
<proteinExistence type="evidence at transcript level"/>
<dbReference type="EMBL" id="M33971">
    <property type="protein sequence ID" value="AAA36959.1"/>
    <property type="molecule type" value="Genomic_DNA"/>
</dbReference>
<dbReference type="PIR" id="I77330">
    <property type="entry name" value="I77330"/>
</dbReference>
<dbReference type="SMR" id="P18436"/>
<dbReference type="STRING" id="1868482.ENSTSYP00000002210"/>
<dbReference type="Proteomes" id="UP000189704">
    <property type="component" value="Unplaced"/>
</dbReference>
<dbReference type="GO" id="GO:0072562">
    <property type="term" value="C:blood microparticle"/>
    <property type="evidence" value="ECO:0007669"/>
    <property type="project" value="TreeGrafter"/>
</dbReference>
<dbReference type="GO" id="GO:0031838">
    <property type="term" value="C:haptoglobin-hemoglobin complex"/>
    <property type="evidence" value="ECO:0007669"/>
    <property type="project" value="TreeGrafter"/>
</dbReference>
<dbReference type="GO" id="GO:0005833">
    <property type="term" value="C:hemoglobin complex"/>
    <property type="evidence" value="ECO:0007669"/>
    <property type="project" value="InterPro"/>
</dbReference>
<dbReference type="GO" id="GO:0031720">
    <property type="term" value="F:haptoglobin binding"/>
    <property type="evidence" value="ECO:0007669"/>
    <property type="project" value="TreeGrafter"/>
</dbReference>
<dbReference type="GO" id="GO:0020037">
    <property type="term" value="F:heme binding"/>
    <property type="evidence" value="ECO:0007669"/>
    <property type="project" value="InterPro"/>
</dbReference>
<dbReference type="GO" id="GO:0031721">
    <property type="term" value="F:hemoglobin alpha binding"/>
    <property type="evidence" value="ECO:0007669"/>
    <property type="project" value="TreeGrafter"/>
</dbReference>
<dbReference type="GO" id="GO:0046872">
    <property type="term" value="F:metal ion binding"/>
    <property type="evidence" value="ECO:0007669"/>
    <property type="project" value="UniProtKB-KW"/>
</dbReference>
<dbReference type="GO" id="GO:0043177">
    <property type="term" value="F:organic acid binding"/>
    <property type="evidence" value="ECO:0007669"/>
    <property type="project" value="TreeGrafter"/>
</dbReference>
<dbReference type="GO" id="GO:0019825">
    <property type="term" value="F:oxygen binding"/>
    <property type="evidence" value="ECO:0007669"/>
    <property type="project" value="InterPro"/>
</dbReference>
<dbReference type="GO" id="GO:0005344">
    <property type="term" value="F:oxygen carrier activity"/>
    <property type="evidence" value="ECO:0007669"/>
    <property type="project" value="UniProtKB-KW"/>
</dbReference>
<dbReference type="GO" id="GO:0004601">
    <property type="term" value="F:peroxidase activity"/>
    <property type="evidence" value="ECO:0007669"/>
    <property type="project" value="TreeGrafter"/>
</dbReference>
<dbReference type="GO" id="GO:0042744">
    <property type="term" value="P:hydrogen peroxide catabolic process"/>
    <property type="evidence" value="ECO:0007669"/>
    <property type="project" value="TreeGrafter"/>
</dbReference>
<dbReference type="CDD" id="cd08925">
    <property type="entry name" value="Hb-beta-like"/>
    <property type="match status" value="1"/>
</dbReference>
<dbReference type="FunFam" id="1.10.490.10:FF:000001">
    <property type="entry name" value="Hemoglobin subunit beta"/>
    <property type="match status" value="1"/>
</dbReference>
<dbReference type="Gene3D" id="1.10.490.10">
    <property type="entry name" value="Globins"/>
    <property type="match status" value="1"/>
</dbReference>
<dbReference type="InterPro" id="IPR000971">
    <property type="entry name" value="Globin"/>
</dbReference>
<dbReference type="InterPro" id="IPR009050">
    <property type="entry name" value="Globin-like_sf"/>
</dbReference>
<dbReference type="InterPro" id="IPR012292">
    <property type="entry name" value="Globin/Proto"/>
</dbReference>
<dbReference type="InterPro" id="IPR002337">
    <property type="entry name" value="Hemoglobin_b"/>
</dbReference>
<dbReference type="InterPro" id="IPR050056">
    <property type="entry name" value="Hemoglobin_oxygen_transport"/>
</dbReference>
<dbReference type="PANTHER" id="PTHR11442">
    <property type="entry name" value="HEMOGLOBIN FAMILY MEMBER"/>
    <property type="match status" value="1"/>
</dbReference>
<dbReference type="PANTHER" id="PTHR11442:SF7">
    <property type="entry name" value="HEMOGLOBIN SUBUNIT EPSILON"/>
    <property type="match status" value="1"/>
</dbReference>
<dbReference type="Pfam" id="PF00042">
    <property type="entry name" value="Globin"/>
    <property type="match status" value="1"/>
</dbReference>
<dbReference type="PRINTS" id="PR00814">
    <property type="entry name" value="BETAHAEM"/>
</dbReference>
<dbReference type="SUPFAM" id="SSF46458">
    <property type="entry name" value="Globin-like"/>
    <property type="match status" value="1"/>
</dbReference>
<dbReference type="PROSITE" id="PS01033">
    <property type="entry name" value="GLOBIN"/>
    <property type="match status" value="1"/>
</dbReference>
<feature type="chain" id="PRO_0000053269" description="Hemoglobin subunit gamma">
    <location>
        <begin position="1"/>
        <end position="148"/>
    </location>
</feature>
<feature type="domain" description="Globin" evidence="1">
    <location>
        <begin position="3"/>
        <end position="148"/>
    </location>
</feature>
<feature type="binding site" description="distal binding residue" evidence="1">
    <location>
        <position position="64"/>
    </location>
    <ligand>
        <name>heme b</name>
        <dbReference type="ChEBI" id="CHEBI:60344"/>
    </ligand>
    <ligandPart>
        <name>Fe</name>
        <dbReference type="ChEBI" id="CHEBI:18248"/>
    </ligandPart>
</feature>
<feature type="binding site" description="proximal binding residue" evidence="1">
    <location>
        <position position="93"/>
    </location>
    <ligand>
        <name>heme b</name>
        <dbReference type="ChEBI" id="CHEBI:60344"/>
    </ligand>
    <ligandPart>
        <name>Fe</name>
        <dbReference type="ChEBI" id="CHEBI:18248"/>
    </ligandPart>
</feature>
<sequence>MVHFTAEEKAIITSLWAKVNVEETGGEALGRLLVVYPWTQRFFDNFGNLSSASAIMGNPKVKAHGKKVLSSLGEAVTHMDDLKDAFAHLSRLHCDELHVDPENFRVTPGKRAVIVLAHHFGREFTPQVQAAWKKLMSAVAIAMGHKYH</sequence>
<gene>
    <name type="primary">HBG</name>
</gene>
<evidence type="ECO:0000255" key="1">
    <source>
        <dbReference type="PROSITE-ProRule" id="PRU00238"/>
    </source>
</evidence>